<proteinExistence type="evidence at protein level"/>
<evidence type="ECO:0000250" key="1"/>
<evidence type="ECO:0000250" key="2">
    <source>
        <dbReference type="UniProtKB" id="Q5VJ70"/>
    </source>
</evidence>
<evidence type="ECO:0000255" key="3"/>
<evidence type="ECO:0000255" key="4">
    <source>
        <dbReference type="PROSITE-ProRule" id="PRU00114"/>
    </source>
</evidence>
<evidence type="ECO:0000256" key="5">
    <source>
        <dbReference type="SAM" id="MobiDB-lite"/>
    </source>
</evidence>
<evidence type="ECO:0000269" key="6">
    <source>
    </source>
</evidence>
<evidence type="ECO:0000269" key="7">
    <source>
    </source>
</evidence>
<evidence type="ECO:0000269" key="8">
    <source>
    </source>
</evidence>
<evidence type="ECO:0000305" key="9"/>
<evidence type="ECO:0007829" key="10">
    <source>
        <dbReference type="PDB" id="3VQG"/>
    </source>
</evidence>
<accession>Q7TSN7</accession>
<accession>Q9D8G2</accession>
<organism>
    <name type="scientific">Mus musculus</name>
    <name type="common">Mouse</name>
    <dbReference type="NCBI Taxonomy" id="10090"/>
    <lineage>
        <taxon>Eukaryota</taxon>
        <taxon>Metazoa</taxon>
        <taxon>Chordata</taxon>
        <taxon>Craniata</taxon>
        <taxon>Vertebrata</taxon>
        <taxon>Euteleostomi</taxon>
        <taxon>Mammalia</taxon>
        <taxon>Eutheria</taxon>
        <taxon>Euarchontoglires</taxon>
        <taxon>Glires</taxon>
        <taxon>Rodentia</taxon>
        <taxon>Myomorpha</taxon>
        <taxon>Muroidea</taxon>
        <taxon>Muridae</taxon>
        <taxon>Murinae</taxon>
        <taxon>Mus</taxon>
        <taxon>Mus</taxon>
    </lineage>
</organism>
<sequence>MEGSWRDVLAVLVILAQLTASGSSYQIIEGPQNVTVLKDSEAHFNCTVTHGWKLLMWTLNQMVVLSLTTQGPIITNNRFTYASYNSTDSFISELIIHDVQPSDSGSVQCSLQNSHGFGSAFLSVQVMGTLNIPSNNLIVTEGEPCNVTCYAVGWTSLPDISWELEVPVSHSSYNSFLESGNFMRVLSVLDLTPLGNGTLTCVAELKDLQASKSLTVNLTVVQPPPDSIGEEGPALPTWAIILLAVAFSLLLILIIVLIIIFCCCCASRREKEESTYQNEIRKSANMRTNKADPETKLKGGKENYGYSSDEAKAAQTASLPPKSAEVSLPEKRSSSLPYQELNKHQPGPATHPRVSFDIASPQKVRNVTLV</sequence>
<feature type="signal peptide" evidence="3">
    <location>
        <begin position="1"/>
        <end position="24"/>
    </location>
</feature>
<feature type="chain" id="PRO_0000316296" description="Immunoglobulin superfamily member 5">
    <location>
        <begin position="25"/>
        <end position="370"/>
    </location>
</feature>
<feature type="topological domain" description="Extracellular" evidence="3">
    <location>
        <begin position="25"/>
        <end position="239"/>
    </location>
</feature>
<feature type="transmembrane region" description="Helical" evidence="3">
    <location>
        <begin position="240"/>
        <end position="260"/>
    </location>
</feature>
<feature type="topological domain" description="Cytoplasmic" evidence="3">
    <location>
        <begin position="261"/>
        <end position="370"/>
    </location>
</feature>
<feature type="domain" description="Ig-like V-type 1">
    <location>
        <begin position="25"/>
        <end position="125"/>
    </location>
</feature>
<feature type="domain" description="Ig-like V-type 2">
    <location>
        <begin position="128"/>
        <end position="215"/>
    </location>
</feature>
<feature type="region of interest" description="Disordered" evidence="5">
    <location>
        <begin position="284"/>
        <end position="359"/>
    </location>
</feature>
<feature type="compositionally biased region" description="Basic and acidic residues" evidence="5">
    <location>
        <begin position="289"/>
        <end position="301"/>
    </location>
</feature>
<feature type="glycosylation site" description="N-linked (GlcNAc...) asparagine" evidence="3">
    <location>
        <position position="33"/>
    </location>
</feature>
<feature type="glycosylation site" description="N-linked (GlcNAc...) asparagine" evidence="3">
    <location>
        <position position="45"/>
    </location>
</feature>
<feature type="glycosylation site" description="N-linked (GlcNAc...) asparagine" evidence="3">
    <location>
        <position position="146"/>
    </location>
</feature>
<feature type="glycosylation site" description="N-linked (GlcNAc...) asparagine" evidence="3">
    <location>
        <position position="196"/>
    </location>
</feature>
<feature type="glycosylation site" description="N-linked (GlcNAc...) asparagine" evidence="3">
    <location>
        <position position="217"/>
    </location>
</feature>
<feature type="disulfide bond" evidence="4">
    <location>
        <begin position="46"/>
        <end position="109"/>
    </location>
</feature>
<feature type="disulfide bond" evidence="4">
    <location>
        <begin position="149"/>
        <end position="201"/>
    </location>
</feature>
<feature type="sequence conflict" description="In Ref. 2; BAB25436/AAH04806." evidence="9" ref="2">
    <location>
        <begin position="126"/>
        <end position="225"/>
    </location>
</feature>
<feature type="sequence conflict" description="In Ref. 2; BAB25436/AAH04806." evidence="9" ref="2">
    <original>G</original>
    <variation>S</variation>
    <location>
        <position position="299"/>
    </location>
</feature>
<feature type="strand" evidence="10">
    <location>
        <begin position="368"/>
        <end position="370"/>
    </location>
</feature>
<comment type="function">
    <text evidence="6 8">Provides, together with MAGI1, an adhesion machinery at tight junctions, which may regulate the permeability of kidney glomerulus and small intestinal epithelial cells. Mediates calcium-independent homophilic cell adhesion. In testis, it may function as a cell adhesion molecule rather than a tight-junction protein. It may participate in the adhesion between spermatogonia-spermatogonia, spermatogonia-Sertoli cells, and Sertoli cells-Sertoli cells.</text>
</comment>
<comment type="subunit">
    <text evidence="1 6 7">Interacts with MAGI1 at tight junctions, forms a tripartite complex with NPHS1 (By similarity). Interacts with LNX1 isoform 2 via its PDZ 2 domain, it may also interact with other isoforms containing this domain.</text>
</comment>
<comment type="subcellular location">
    <subcellularLocation>
        <location evidence="2">Apical cell membrane</location>
        <topology evidence="3">Single-pass type I membrane protein</topology>
    </subcellularLocation>
    <subcellularLocation>
        <location evidence="2">Cell junction</location>
        <location evidence="2">Tight junction</location>
    </subcellularLocation>
</comment>
<comment type="tissue specificity">
    <text evidence="6 8">Localized to kidney glomeruli and small intestinal epithelial cells. In kidney glomeruli, it is localized at slit diaphragm. Also found in spermatogonia, gonocytes, hematopoietic stem cells and Sertoli cells.</text>
</comment>
<comment type="PTM">
    <text evidence="6">N-glycosylated.</text>
</comment>
<comment type="disruption phenotype">
    <text evidence="8">No visible phenotype.</text>
</comment>
<comment type="similarity">
    <text evidence="9">Belongs to the immunoglobulin superfamily.</text>
</comment>
<dbReference type="EMBL" id="AF537215">
    <property type="protein sequence ID" value="AAP49218.1"/>
    <property type="molecule type" value="mRNA"/>
</dbReference>
<dbReference type="EMBL" id="AK008060">
    <property type="protein sequence ID" value="BAB25436.1"/>
    <property type="molecule type" value="mRNA"/>
</dbReference>
<dbReference type="EMBL" id="BC004806">
    <property type="protein sequence ID" value="AAH04806.1"/>
    <property type="molecule type" value="mRNA"/>
</dbReference>
<dbReference type="CCDS" id="CCDS49924.1"/>
<dbReference type="RefSeq" id="NP_082354.1">
    <property type="nucleotide sequence ID" value="NM_028078.3"/>
</dbReference>
<dbReference type="PDB" id="3VQG">
    <property type="method" value="X-ray"/>
    <property type="resolution" value="1.35 A"/>
    <property type="chains" value="B=363-370"/>
</dbReference>
<dbReference type="PDBsum" id="3VQG"/>
<dbReference type="SMR" id="Q7TSN7"/>
<dbReference type="BioGRID" id="215124">
    <property type="interactions" value="3"/>
</dbReference>
<dbReference type="CORUM" id="Q7TSN7"/>
<dbReference type="FunCoup" id="Q7TSN7">
    <property type="interactions" value="11"/>
</dbReference>
<dbReference type="STRING" id="10090.ENSMUSP00000109425"/>
<dbReference type="GlyCosmos" id="Q7TSN7">
    <property type="glycosylation" value="5 sites, No reported glycans"/>
</dbReference>
<dbReference type="GlyGen" id="Q7TSN7">
    <property type="glycosylation" value="5 sites"/>
</dbReference>
<dbReference type="iPTMnet" id="Q7TSN7"/>
<dbReference type="PhosphoSitePlus" id="Q7TSN7"/>
<dbReference type="PaxDb" id="10090-ENSMUSP00000109425"/>
<dbReference type="ProteomicsDB" id="267205"/>
<dbReference type="ABCD" id="Q7TSN7">
    <property type="antibodies" value="10 sequenced antibodies"/>
</dbReference>
<dbReference type="GeneID" id="72058"/>
<dbReference type="KEGG" id="mmu:72058"/>
<dbReference type="AGR" id="MGI:1919308"/>
<dbReference type="CTD" id="150084"/>
<dbReference type="MGI" id="MGI:1919308">
    <property type="gene designation" value="Igsf5"/>
</dbReference>
<dbReference type="eggNOG" id="ENOG502S38D">
    <property type="taxonomic scope" value="Eukaryota"/>
</dbReference>
<dbReference type="InParanoid" id="Q7TSN7"/>
<dbReference type="OrthoDB" id="8822248at2759"/>
<dbReference type="BioGRID-ORCS" id="72058">
    <property type="hits" value="2 hits in 77 CRISPR screens"/>
</dbReference>
<dbReference type="EvolutionaryTrace" id="Q7TSN7"/>
<dbReference type="PRO" id="PR:Q7TSN7"/>
<dbReference type="Proteomes" id="UP000000589">
    <property type="component" value="Unplaced"/>
</dbReference>
<dbReference type="RNAct" id="Q7TSN7">
    <property type="molecule type" value="protein"/>
</dbReference>
<dbReference type="GO" id="GO:0016324">
    <property type="term" value="C:apical plasma membrane"/>
    <property type="evidence" value="ECO:0007669"/>
    <property type="project" value="UniProtKB-SubCell"/>
</dbReference>
<dbReference type="GO" id="GO:0005923">
    <property type="term" value="C:bicellular tight junction"/>
    <property type="evidence" value="ECO:0000314"/>
    <property type="project" value="MGI"/>
</dbReference>
<dbReference type="GO" id="GO:0009986">
    <property type="term" value="C:cell surface"/>
    <property type="evidence" value="ECO:0000314"/>
    <property type="project" value="MGI"/>
</dbReference>
<dbReference type="GO" id="GO:0030165">
    <property type="term" value="F:PDZ domain binding"/>
    <property type="evidence" value="ECO:0000314"/>
    <property type="project" value="MGI"/>
</dbReference>
<dbReference type="GO" id="GO:0098609">
    <property type="term" value="P:cell-cell adhesion"/>
    <property type="evidence" value="ECO:0000314"/>
    <property type="project" value="MGI"/>
</dbReference>
<dbReference type="FunFam" id="2.60.40.10:FF:001503">
    <property type="entry name" value="Immunoglobulin superfamily member 5"/>
    <property type="match status" value="1"/>
</dbReference>
<dbReference type="FunFam" id="2.60.40.10:FF:001261">
    <property type="entry name" value="immunoglobulin superfamily member 5"/>
    <property type="match status" value="1"/>
</dbReference>
<dbReference type="Gene3D" id="2.60.40.10">
    <property type="entry name" value="Immunoglobulins"/>
    <property type="match status" value="2"/>
</dbReference>
<dbReference type="InterPro" id="IPR007110">
    <property type="entry name" value="Ig-like_dom"/>
</dbReference>
<dbReference type="InterPro" id="IPR036179">
    <property type="entry name" value="Ig-like_dom_sf"/>
</dbReference>
<dbReference type="InterPro" id="IPR013783">
    <property type="entry name" value="Ig-like_fold"/>
</dbReference>
<dbReference type="InterPro" id="IPR003599">
    <property type="entry name" value="Ig_sub"/>
</dbReference>
<dbReference type="InterPro" id="IPR013151">
    <property type="entry name" value="Immunoglobulin_dom"/>
</dbReference>
<dbReference type="PANTHER" id="PTHR44991">
    <property type="entry name" value="IMMUNOGLOBULIN SUPERFAMILY MEMBER 5"/>
    <property type="match status" value="1"/>
</dbReference>
<dbReference type="PANTHER" id="PTHR44991:SF1">
    <property type="entry name" value="IMMUNOGLOBULIN SUPERFAMILY MEMBER 5"/>
    <property type="match status" value="1"/>
</dbReference>
<dbReference type="Pfam" id="PF00047">
    <property type="entry name" value="ig"/>
    <property type="match status" value="1"/>
</dbReference>
<dbReference type="SMART" id="SM00409">
    <property type="entry name" value="IG"/>
    <property type="match status" value="2"/>
</dbReference>
<dbReference type="SUPFAM" id="SSF48726">
    <property type="entry name" value="Immunoglobulin"/>
    <property type="match status" value="2"/>
</dbReference>
<dbReference type="PROSITE" id="PS50835">
    <property type="entry name" value="IG_LIKE"/>
    <property type="match status" value="1"/>
</dbReference>
<reference key="1">
    <citation type="journal article" date="2003" name="Mol. Cell. Biol.">
        <title>JAM4, a junctional cell adhesion molecule interacting with a tight junction protein, MAGI-1.</title>
        <authorList>
            <person name="Hirabayashi S."/>
            <person name="Tajima M."/>
            <person name="Yao I."/>
            <person name="Nishimura W."/>
            <person name="Mori H."/>
            <person name="Hata Y."/>
        </authorList>
    </citation>
    <scope>NUCLEOTIDE SEQUENCE [MRNA]</scope>
    <scope>FUNCTION</scope>
    <scope>INTERACTION WITH MAGI1</scope>
    <scope>TISSUE SPECIFICITY</scope>
    <scope>GLYCOSYLATION</scope>
    <source>
        <strain>Swiss Webster</strain>
    </source>
</reference>
<reference key="2">
    <citation type="journal article" date="2005" name="Science">
        <title>The transcriptional landscape of the mammalian genome.</title>
        <authorList>
            <person name="Carninci P."/>
            <person name="Kasukawa T."/>
            <person name="Katayama S."/>
            <person name="Gough J."/>
            <person name="Frith M.C."/>
            <person name="Maeda N."/>
            <person name="Oyama R."/>
            <person name="Ravasi T."/>
            <person name="Lenhard B."/>
            <person name="Wells C."/>
            <person name="Kodzius R."/>
            <person name="Shimokawa K."/>
            <person name="Bajic V.B."/>
            <person name="Brenner S.E."/>
            <person name="Batalov S."/>
            <person name="Forrest A.R."/>
            <person name="Zavolan M."/>
            <person name="Davis M.J."/>
            <person name="Wilming L.G."/>
            <person name="Aidinis V."/>
            <person name="Allen J.E."/>
            <person name="Ambesi-Impiombato A."/>
            <person name="Apweiler R."/>
            <person name="Aturaliya R.N."/>
            <person name="Bailey T.L."/>
            <person name="Bansal M."/>
            <person name="Baxter L."/>
            <person name="Beisel K.W."/>
            <person name="Bersano T."/>
            <person name="Bono H."/>
            <person name="Chalk A.M."/>
            <person name="Chiu K.P."/>
            <person name="Choudhary V."/>
            <person name="Christoffels A."/>
            <person name="Clutterbuck D.R."/>
            <person name="Crowe M.L."/>
            <person name="Dalla E."/>
            <person name="Dalrymple B.P."/>
            <person name="de Bono B."/>
            <person name="Della Gatta G."/>
            <person name="di Bernardo D."/>
            <person name="Down T."/>
            <person name="Engstrom P."/>
            <person name="Fagiolini M."/>
            <person name="Faulkner G."/>
            <person name="Fletcher C.F."/>
            <person name="Fukushima T."/>
            <person name="Furuno M."/>
            <person name="Futaki S."/>
            <person name="Gariboldi M."/>
            <person name="Georgii-Hemming P."/>
            <person name="Gingeras T.R."/>
            <person name="Gojobori T."/>
            <person name="Green R.E."/>
            <person name="Gustincich S."/>
            <person name="Harbers M."/>
            <person name="Hayashi Y."/>
            <person name="Hensch T.K."/>
            <person name="Hirokawa N."/>
            <person name="Hill D."/>
            <person name="Huminiecki L."/>
            <person name="Iacono M."/>
            <person name="Ikeo K."/>
            <person name="Iwama A."/>
            <person name="Ishikawa T."/>
            <person name="Jakt M."/>
            <person name="Kanapin A."/>
            <person name="Katoh M."/>
            <person name="Kawasawa Y."/>
            <person name="Kelso J."/>
            <person name="Kitamura H."/>
            <person name="Kitano H."/>
            <person name="Kollias G."/>
            <person name="Krishnan S.P."/>
            <person name="Kruger A."/>
            <person name="Kummerfeld S.K."/>
            <person name="Kurochkin I.V."/>
            <person name="Lareau L.F."/>
            <person name="Lazarevic D."/>
            <person name="Lipovich L."/>
            <person name="Liu J."/>
            <person name="Liuni S."/>
            <person name="McWilliam S."/>
            <person name="Madan Babu M."/>
            <person name="Madera M."/>
            <person name="Marchionni L."/>
            <person name="Matsuda H."/>
            <person name="Matsuzawa S."/>
            <person name="Miki H."/>
            <person name="Mignone F."/>
            <person name="Miyake S."/>
            <person name="Morris K."/>
            <person name="Mottagui-Tabar S."/>
            <person name="Mulder N."/>
            <person name="Nakano N."/>
            <person name="Nakauchi H."/>
            <person name="Ng P."/>
            <person name="Nilsson R."/>
            <person name="Nishiguchi S."/>
            <person name="Nishikawa S."/>
            <person name="Nori F."/>
            <person name="Ohara O."/>
            <person name="Okazaki Y."/>
            <person name="Orlando V."/>
            <person name="Pang K.C."/>
            <person name="Pavan W.J."/>
            <person name="Pavesi G."/>
            <person name="Pesole G."/>
            <person name="Petrovsky N."/>
            <person name="Piazza S."/>
            <person name="Reed J."/>
            <person name="Reid J.F."/>
            <person name="Ring B.Z."/>
            <person name="Ringwald M."/>
            <person name="Rost B."/>
            <person name="Ruan Y."/>
            <person name="Salzberg S.L."/>
            <person name="Sandelin A."/>
            <person name="Schneider C."/>
            <person name="Schoenbach C."/>
            <person name="Sekiguchi K."/>
            <person name="Semple C.A."/>
            <person name="Seno S."/>
            <person name="Sessa L."/>
            <person name="Sheng Y."/>
            <person name="Shibata Y."/>
            <person name="Shimada H."/>
            <person name="Shimada K."/>
            <person name="Silva D."/>
            <person name="Sinclair B."/>
            <person name="Sperling S."/>
            <person name="Stupka E."/>
            <person name="Sugiura K."/>
            <person name="Sultana R."/>
            <person name="Takenaka Y."/>
            <person name="Taki K."/>
            <person name="Tammoja K."/>
            <person name="Tan S.L."/>
            <person name="Tang S."/>
            <person name="Taylor M.S."/>
            <person name="Tegner J."/>
            <person name="Teichmann S.A."/>
            <person name="Ueda H.R."/>
            <person name="van Nimwegen E."/>
            <person name="Verardo R."/>
            <person name="Wei C.L."/>
            <person name="Yagi K."/>
            <person name="Yamanishi H."/>
            <person name="Zabarovsky E."/>
            <person name="Zhu S."/>
            <person name="Zimmer A."/>
            <person name="Hide W."/>
            <person name="Bult C."/>
            <person name="Grimmond S.M."/>
            <person name="Teasdale R.D."/>
            <person name="Liu E.T."/>
            <person name="Brusic V."/>
            <person name="Quackenbush J."/>
            <person name="Wahlestedt C."/>
            <person name="Mattick J.S."/>
            <person name="Hume D.A."/>
            <person name="Kai C."/>
            <person name="Sasaki D."/>
            <person name="Tomaru Y."/>
            <person name="Fukuda S."/>
            <person name="Kanamori-Katayama M."/>
            <person name="Suzuki M."/>
            <person name="Aoki J."/>
            <person name="Arakawa T."/>
            <person name="Iida J."/>
            <person name="Imamura K."/>
            <person name="Itoh M."/>
            <person name="Kato T."/>
            <person name="Kawaji H."/>
            <person name="Kawagashira N."/>
            <person name="Kawashima T."/>
            <person name="Kojima M."/>
            <person name="Kondo S."/>
            <person name="Konno H."/>
            <person name="Nakano K."/>
            <person name="Ninomiya N."/>
            <person name="Nishio T."/>
            <person name="Okada M."/>
            <person name="Plessy C."/>
            <person name="Shibata K."/>
            <person name="Shiraki T."/>
            <person name="Suzuki S."/>
            <person name="Tagami M."/>
            <person name="Waki K."/>
            <person name="Watahiki A."/>
            <person name="Okamura-Oho Y."/>
            <person name="Suzuki H."/>
            <person name="Kawai J."/>
            <person name="Hayashizaki Y."/>
        </authorList>
    </citation>
    <scope>NUCLEOTIDE SEQUENCE [LARGE SCALE MRNA]</scope>
    <source>
        <strain>C57BL/6J</strain>
        <tissue>Small intestine</tissue>
    </source>
</reference>
<reference key="3">
    <citation type="journal article" date="2004" name="Genome Res.">
        <title>The status, quality, and expansion of the NIH full-length cDNA project: the Mammalian Gene Collection (MGC).</title>
        <authorList>
            <consortium name="The MGC Project Team"/>
        </authorList>
    </citation>
    <scope>NUCLEOTIDE SEQUENCE [LARGE SCALE MRNA]</scope>
    <source>
        <strain>FVB/N</strain>
        <tissue>Mammary tumor</tissue>
    </source>
</reference>
<reference key="4">
    <citation type="journal article" date="2006" name="Mol. Cell. Biol.">
        <title>A CTX family cell adhesion molecule, JAM4, is expressed in stem cell and progenitor cell populations of both male germ cell and hematopoietic cell lineages.</title>
        <authorList>
            <person name="Nagamatsu G."/>
            <person name="Ohmura M."/>
            <person name="Mizukami T."/>
            <person name="Hamaguchi I."/>
            <person name="Hirabayashi S."/>
            <person name="Yoshida S."/>
            <person name="Hata Y."/>
            <person name="Suda T."/>
            <person name="Ohbo K."/>
        </authorList>
    </citation>
    <scope>FUNCTION</scope>
    <scope>TISSUE SPECIFICITY</scope>
    <scope>DISRUPTION PHENOTYPE</scope>
</reference>
<reference key="5">
    <citation type="journal article" date="2006" name="Oncogene">
        <title>Ligand-of-Numb protein X is an endocytic scaffold for junctional adhesion molecule 4.</title>
        <authorList>
            <person name="Kansaku A."/>
            <person name="Hirabayashi S."/>
            <person name="Mori H."/>
            <person name="Fujiwara N."/>
            <person name="Kawata A."/>
            <person name="Ikeda M."/>
            <person name="Rokukawa C."/>
            <person name="Kurihara H."/>
            <person name="Hata Y."/>
        </authorList>
    </citation>
    <scope>INTERACTION WITH LNX1 ISOFORM 2</scope>
</reference>
<protein>
    <recommendedName>
        <fullName>Immunoglobulin superfamily member 5</fullName>
        <shortName>IgSF5</shortName>
    </recommendedName>
    <alternativeName>
        <fullName>Junctional adhesion molecule 4</fullName>
        <shortName>JAM-4</shortName>
    </alternativeName>
</protein>
<keyword id="KW-0002">3D-structure</keyword>
<keyword id="KW-0965">Cell junction</keyword>
<keyword id="KW-1003">Cell membrane</keyword>
<keyword id="KW-1015">Disulfide bond</keyword>
<keyword id="KW-0325">Glycoprotein</keyword>
<keyword id="KW-0393">Immunoglobulin domain</keyword>
<keyword id="KW-0472">Membrane</keyword>
<keyword id="KW-1185">Reference proteome</keyword>
<keyword id="KW-0677">Repeat</keyword>
<keyword id="KW-0732">Signal</keyword>
<keyword id="KW-0796">Tight junction</keyword>
<keyword id="KW-0812">Transmembrane</keyword>
<keyword id="KW-1133">Transmembrane helix</keyword>
<gene>
    <name type="primary">Igsf5</name>
    <name type="synonym">Jam4</name>
</gene>
<name>IGSF5_MOUSE</name>